<sequence>MLDVKNTGVFSSAFIDRLNAMTNSDDGDETADAELDSGLANSKYIDSSDEMASALSSFINRRDLEKLKGTNSDSQERILDGEEDEINHKIFDLKRTLKDNLPLDRDFIDRLKRYFKDPSDQVLALRELLNEKDLTAEQVELLTKIINEIISGSEKSVNAGINSAIQAKLFGNKMKLEPQLLRACYRGFIMGNISTTDQYIEWLGNFGFNHRHTIVNFVEQSLIVDMDSEKPSCNAYEFGFVLSKLIAIKMIRTSDVIFMKKLESSSLLKDGSLSAEQLLLTLLYIFQYPSESEQILTSVIEVSRASHEDSVVYQTYLSSVNESPHDIFKSESEREIAINILRELVTSAYKKELSR</sequence>
<comment type="function">
    <text>Necessary for the secretion of IPA invasins.</text>
</comment>
<comment type="interaction">
    <interactant intactId="EBI-6405310">
        <id>Q04640</id>
    </interactant>
    <interactant intactId="EBI-975017">
        <id>Q6XVW8</id>
        <label>spa47</label>
    </interactant>
    <organismsDiffer>false</organismsDiffer>
    <experiments>3</experiments>
</comment>
<comment type="subcellular location">
    <subcellularLocation>
        <location evidence="1">Secreted</location>
    </subcellularLocation>
    <subcellularLocation>
        <location evidence="3">Host cell</location>
    </subcellularLocation>
    <text evidence="2">Secreted via Mxi-Spa type III secretion system (T3SS), and delivered into the host cytoplasm.</text>
</comment>
<organism>
    <name type="scientific">Shigella flexneri</name>
    <dbReference type="NCBI Taxonomy" id="623"/>
    <lineage>
        <taxon>Bacteria</taxon>
        <taxon>Pseudomonadati</taxon>
        <taxon>Pseudomonadota</taxon>
        <taxon>Gammaproteobacteria</taxon>
        <taxon>Enterobacterales</taxon>
        <taxon>Enterobacteriaceae</taxon>
        <taxon>Shigella</taxon>
    </lineage>
</organism>
<evidence type="ECO:0000269" key="1">
    <source>
    </source>
</evidence>
<evidence type="ECO:0000305" key="2"/>
<evidence type="ECO:0000305" key="3">
    <source>
    </source>
</evidence>
<evidence type="ECO:0007829" key="4">
    <source>
        <dbReference type="PDB" id="2VIX"/>
    </source>
</evidence>
<evidence type="ECO:0007829" key="5">
    <source>
        <dbReference type="PDB" id="2VJ4"/>
    </source>
</evidence>
<evidence type="ECO:0007829" key="6">
    <source>
        <dbReference type="PDB" id="2VJ5"/>
    </source>
</evidence>
<gene>
    <name type="primary">mxiC</name>
    <name type="ordered locus">CP0146</name>
</gene>
<accession>Q04640</accession>
<accession>Q8VSG9</accession>
<accession>Q99QB7</accession>
<proteinExistence type="evidence at protein level"/>
<reference key="1">
    <citation type="journal article" date="2000" name="Mol. Microbiol.">
        <title>The virulence plasmid pWR100 and the repertoire of proteins secreted by the type III secretion apparatus of Shigella flexneri.</title>
        <authorList>
            <person name="Buchrieser C."/>
            <person name="Glaser P."/>
            <person name="Rusniok C."/>
            <person name="Nedjari H."/>
            <person name="d'Hauteville H."/>
            <person name="Kunst F."/>
            <person name="Sansonetti P.J."/>
            <person name="Parsot C."/>
        </authorList>
    </citation>
    <scope>NUCLEOTIDE SEQUENCE [GENOMIC DNA]</scope>
    <scope>PROTEIN SEQUENCE OF 1-5</scope>
    <scope>SUBCELLULAR LOCATION</scope>
    <source>
        <strain>M90T / Serotype 5a</strain>
        <plasmid>pWR100</plasmid>
    </source>
</reference>
<reference key="2">
    <citation type="journal article" date="2001" name="Infect. Immun.">
        <title>Complete DNA sequence and analysis of the large virulence plasmid of Shigella flexneri.</title>
        <authorList>
            <person name="Venkatesan M.M."/>
            <person name="Goldberg M.B."/>
            <person name="Rose D.J."/>
            <person name="Grotbeck E.J."/>
            <person name="Burland V."/>
            <person name="Blattner F.R."/>
        </authorList>
    </citation>
    <scope>NUCLEOTIDE SEQUENCE [GENOMIC DNA]</scope>
    <source>
        <strain>M90T / Serotype 5a</strain>
        <plasmid>pWR501</plasmid>
    </source>
</reference>
<reference key="3">
    <citation type="journal article" date="2002" name="Nucleic Acids Res.">
        <title>Genome sequence of Shigella flexneri 2a: insights into pathogenicity through comparison with genomes of Escherichia coli K12 and O157.</title>
        <authorList>
            <person name="Jin Q."/>
            <person name="Yuan Z."/>
            <person name="Xu J."/>
            <person name="Wang Y."/>
            <person name="Shen Y."/>
            <person name="Lu W."/>
            <person name="Wang J."/>
            <person name="Liu H."/>
            <person name="Yang J."/>
            <person name="Yang F."/>
            <person name="Zhang X."/>
            <person name="Zhang J."/>
            <person name="Yang G."/>
            <person name="Wu H."/>
            <person name="Qu D."/>
            <person name="Dong J."/>
            <person name="Sun L."/>
            <person name="Xue Y."/>
            <person name="Zhao A."/>
            <person name="Gao Y."/>
            <person name="Zhu J."/>
            <person name="Kan B."/>
            <person name="Ding K."/>
            <person name="Chen S."/>
            <person name="Cheng H."/>
            <person name="Yao Z."/>
            <person name="He B."/>
            <person name="Chen R."/>
            <person name="Ma D."/>
            <person name="Qiang B."/>
            <person name="Wen Y."/>
            <person name="Hou Y."/>
            <person name="Yu J."/>
        </authorList>
    </citation>
    <scope>NUCLEOTIDE SEQUENCE [LARGE SCALE GENOMIC DNA]</scope>
    <source>
        <strain>301 / Serotype 2a</strain>
        <plasmid>pCP301</plasmid>
    </source>
</reference>
<reference key="4">
    <citation type="journal article" date="1993" name="Mol. Microbiol.">
        <title>MxiD, an outer membrane protein necessary for the secretion of the Shigella flexneri lpa invasins.</title>
        <authorList>
            <person name="Allaoui A."/>
            <person name="Sansonetti P.J."/>
            <person name="Parsot C."/>
        </authorList>
    </citation>
    <scope>NUCLEOTIDE SEQUENCE [GENOMIC DNA] OF 1-92</scope>
    <source>
        <strain>M90T / Serotype 5a</strain>
        <plasmid>pWR100</plasmid>
    </source>
</reference>
<reference key="5">
    <citation type="journal article" date="1992" name="Infect. Immun.">
        <title>mxiA of Shigella flexneri 2a, which facilitates export of invasion plasmid antigens, encodes a homolog of the low-calcium-response protein, LcrD, of Yersinia pestis.</title>
        <authorList>
            <person name="Andrews G.P."/>
            <person name="Maurelli A.T."/>
        </authorList>
    </citation>
    <scope>NUCLEOTIDE SEQUENCE [GENOMIC DNA] OF 266-355</scope>
    <source>
        <strain>ATCC 700930 / 2457T / Serotype 2a</strain>
        <plasmid>pWR100</plasmid>
    </source>
</reference>
<keyword id="KW-0002">3D-structure</keyword>
<keyword id="KW-0903">Direct protein sequencing</keyword>
<keyword id="KW-0614">Plasmid</keyword>
<keyword id="KW-1185">Reference proteome</keyword>
<keyword id="KW-0964">Secreted</keyword>
<keyword id="KW-0813">Transport</keyword>
<keyword id="KW-0843">Virulence</keyword>
<name>MXIC_SHIFL</name>
<dbReference type="EMBL" id="AL391753">
    <property type="protein sequence ID" value="CAC05821.1"/>
    <property type="molecule type" value="Genomic_DNA"/>
</dbReference>
<dbReference type="EMBL" id="AF348706">
    <property type="protein sequence ID" value="AAK18465.1"/>
    <property type="molecule type" value="Genomic_DNA"/>
</dbReference>
<dbReference type="EMBL" id="AF386526">
    <property type="protein sequence ID" value="AAL72332.1"/>
    <property type="molecule type" value="Genomic_DNA"/>
</dbReference>
<dbReference type="EMBL" id="X67206">
    <property type="protein sequence ID" value="CAA47645.1"/>
    <property type="molecule type" value="Genomic_DNA"/>
</dbReference>
<dbReference type="EMBL" id="M91664">
    <property type="status" value="NOT_ANNOTATED_CDS"/>
    <property type="molecule type" value="Genomic_DNA"/>
</dbReference>
<dbReference type="PIR" id="B44797">
    <property type="entry name" value="B44797"/>
</dbReference>
<dbReference type="PIR" id="S28069">
    <property type="entry name" value="S28069"/>
</dbReference>
<dbReference type="RefSeq" id="NP_085309.1">
    <property type="nucleotide sequence ID" value="NC_002698.1"/>
</dbReference>
<dbReference type="RefSeq" id="NP_858279.1">
    <property type="nucleotide sequence ID" value="NC_004851.1"/>
</dbReference>
<dbReference type="RefSeq" id="WP_010921674.1">
    <property type="nucleotide sequence ID" value="NZ_QWST01000007.1"/>
</dbReference>
<dbReference type="RefSeq" id="YP_009062503.1">
    <property type="nucleotide sequence ID" value="NC_024996.1"/>
</dbReference>
<dbReference type="PDB" id="2VIX">
    <property type="method" value="X-ray"/>
    <property type="resolution" value="2.85 A"/>
    <property type="chains" value="A/B/C=74-355"/>
</dbReference>
<dbReference type="PDB" id="2VJ4">
    <property type="method" value="X-ray"/>
    <property type="resolution" value="2.50 A"/>
    <property type="chains" value="A/B=74-355"/>
</dbReference>
<dbReference type="PDB" id="2VJ5">
    <property type="method" value="X-ray"/>
    <property type="resolution" value="3.00 A"/>
    <property type="chains" value="A/B=74-355"/>
</dbReference>
<dbReference type="PDBsum" id="2VIX"/>
<dbReference type="PDBsum" id="2VJ4"/>
<dbReference type="PDBsum" id="2VJ5"/>
<dbReference type="SMR" id="Q04640"/>
<dbReference type="IntAct" id="Q04640">
    <property type="interactions" value="1"/>
</dbReference>
<dbReference type="PaxDb" id="198214-CP0146"/>
<dbReference type="GeneID" id="1238035"/>
<dbReference type="KEGG" id="sfl:CP0146"/>
<dbReference type="PATRIC" id="fig|198214.7.peg.5393"/>
<dbReference type="HOGENOM" id="CLU_056140_1_0_6"/>
<dbReference type="EvolutionaryTrace" id="Q04640"/>
<dbReference type="Proteomes" id="UP000001006">
    <property type="component" value="Plasmid pCP301"/>
</dbReference>
<dbReference type="GO" id="GO:0009986">
    <property type="term" value="C:cell surface"/>
    <property type="evidence" value="ECO:0007669"/>
    <property type="project" value="InterPro"/>
</dbReference>
<dbReference type="GO" id="GO:0005576">
    <property type="term" value="C:extracellular region"/>
    <property type="evidence" value="ECO:0007669"/>
    <property type="project" value="UniProtKB-SubCell"/>
</dbReference>
<dbReference type="GO" id="GO:0043657">
    <property type="term" value="C:host cell"/>
    <property type="evidence" value="ECO:0007669"/>
    <property type="project" value="UniProtKB-SubCell"/>
</dbReference>
<dbReference type="GO" id="GO:0019867">
    <property type="term" value="C:outer membrane"/>
    <property type="evidence" value="ECO:0007669"/>
    <property type="project" value="InterPro"/>
</dbReference>
<dbReference type="GO" id="GO:0050709">
    <property type="term" value="P:negative regulation of protein secretion"/>
    <property type="evidence" value="ECO:0000315"/>
    <property type="project" value="CACAO"/>
</dbReference>
<dbReference type="GO" id="GO:0030254">
    <property type="term" value="P:protein secretion by the type III secretion system"/>
    <property type="evidence" value="ECO:0007669"/>
    <property type="project" value="InterPro"/>
</dbReference>
<dbReference type="Gene3D" id="1.10.10.2060">
    <property type="match status" value="1"/>
</dbReference>
<dbReference type="Gene3D" id="1.10.150.630">
    <property type="match status" value="1"/>
</dbReference>
<dbReference type="Gene3D" id="1.20.1280.240">
    <property type="match status" value="1"/>
</dbReference>
<dbReference type="InterPro" id="IPR010812">
    <property type="entry name" value="HrpJ-like"/>
</dbReference>
<dbReference type="InterPro" id="IPR003520">
    <property type="entry name" value="Invas_InvE"/>
</dbReference>
<dbReference type="InterPro" id="IPR049013">
    <property type="entry name" value="MxiC_C"/>
</dbReference>
<dbReference type="InterPro" id="IPR013401">
    <property type="entry name" value="T3SS_LcrE"/>
</dbReference>
<dbReference type="NCBIfam" id="TIGR02568">
    <property type="entry name" value="LcrE"/>
    <property type="match status" value="1"/>
</dbReference>
<dbReference type="Pfam" id="PF07201">
    <property type="entry name" value="HrpJ"/>
    <property type="match status" value="1"/>
</dbReference>
<dbReference type="Pfam" id="PF21439">
    <property type="entry name" value="MxiC_C"/>
    <property type="match status" value="1"/>
</dbReference>
<dbReference type="PRINTS" id="PR01344">
    <property type="entry name" value="INVEPROTEIN"/>
</dbReference>
<dbReference type="SUPFAM" id="SSF140591">
    <property type="entry name" value="Type III secretion system domain"/>
    <property type="match status" value="1"/>
</dbReference>
<protein>
    <recommendedName>
        <fullName>Protein MxiC</fullName>
    </recommendedName>
</protein>
<geneLocation type="plasmid">
    <name>pWR100</name>
</geneLocation>
<geneLocation type="plasmid">
    <name>pWR501</name>
</geneLocation>
<geneLocation type="plasmid">
    <name>pCP301</name>
</geneLocation>
<feature type="chain" id="PRO_0000096656" description="Protein MxiC">
    <location>
        <begin position="1"/>
        <end position="355"/>
    </location>
</feature>
<feature type="sequence variant" description="In plasmid pCP301.">
    <original>R</original>
    <variation>K</variation>
    <location>
        <position position="17"/>
    </location>
</feature>
<feature type="helix" evidence="5">
    <location>
        <begin position="75"/>
        <end position="77"/>
    </location>
</feature>
<feature type="helix" evidence="5">
    <location>
        <begin position="83"/>
        <end position="88"/>
    </location>
</feature>
<feature type="turn" evidence="5">
    <location>
        <begin position="91"/>
        <end position="93"/>
    </location>
</feature>
<feature type="turn" evidence="5">
    <location>
        <begin position="105"/>
        <end position="107"/>
    </location>
</feature>
<feature type="helix" evidence="5">
    <location>
        <begin position="108"/>
        <end position="111"/>
    </location>
</feature>
<feature type="helix" evidence="5">
    <location>
        <begin position="118"/>
        <end position="128"/>
    </location>
</feature>
<feature type="helix" evidence="5">
    <location>
        <begin position="138"/>
        <end position="143"/>
    </location>
</feature>
<feature type="helix" evidence="5">
    <location>
        <begin position="146"/>
        <end position="150"/>
    </location>
</feature>
<feature type="helix" evidence="5">
    <location>
        <begin position="157"/>
        <end position="162"/>
    </location>
</feature>
<feature type="helix" evidence="5">
    <location>
        <begin position="164"/>
        <end position="167"/>
    </location>
</feature>
<feature type="turn" evidence="5">
    <location>
        <begin position="170"/>
        <end position="172"/>
    </location>
</feature>
<feature type="helix" evidence="5">
    <location>
        <begin position="178"/>
        <end position="190"/>
    </location>
</feature>
<feature type="helix" evidence="5">
    <location>
        <begin position="195"/>
        <end position="206"/>
    </location>
</feature>
<feature type="helix" evidence="4">
    <location>
        <begin position="208"/>
        <end position="210"/>
    </location>
</feature>
<feature type="helix" evidence="5">
    <location>
        <begin position="211"/>
        <end position="227"/>
    </location>
</feature>
<feature type="strand" evidence="6">
    <location>
        <begin position="228"/>
        <end position="230"/>
    </location>
</feature>
<feature type="helix" evidence="5">
    <location>
        <begin position="235"/>
        <end position="243"/>
    </location>
</feature>
<feature type="turn" evidence="5">
    <location>
        <begin position="246"/>
        <end position="248"/>
    </location>
</feature>
<feature type="helix" evidence="5">
    <location>
        <begin position="251"/>
        <end position="259"/>
    </location>
</feature>
<feature type="turn" evidence="5">
    <location>
        <begin position="263"/>
        <end position="268"/>
    </location>
</feature>
<feature type="strand" evidence="6">
    <location>
        <begin position="270"/>
        <end position="273"/>
    </location>
</feature>
<feature type="helix" evidence="5">
    <location>
        <begin position="275"/>
        <end position="287"/>
    </location>
</feature>
<feature type="helix" evidence="5">
    <location>
        <begin position="289"/>
        <end position="291"/>
    </location>
</feature>
<feature type="helix" evidence="5">
    <location>
        <begin position="292"/>
        <end position="295"/>
    </location>
</feature>
<feature type="helix" evidence="5">
    <location>
        <begin position="297"/>
        <end position="303"/>
    </location>
</feature>
<feature type="turn" evidence="5">
    <location>
        <begin position="304"/>
        <end position="306"/>
    </location>
</feature>
<feature type="helix" evidence="5">
    <location>
        <begin position="309"/>
        <end position="321"/>
    </location>
</feature>
<feature type="helix" evidence="5">
    <location>
        <begin position="325"/>
        <end position="327"/>
    </location>
</feature>
<feature type="helix" evidence="5">
    <location>
        <begin position="331"/>
        <end position="349"/>
    </location>
</feature>
<feature type="turn" evidence="6">
    <location>
        <begin position="350"/>
        <end position="354"/>
    </location>
</feature>